<name>PA2BA_MICNI</name>
<keyword id="KW-0106">Calcium</keyword>
<keyword id="KW-0903">Direct protein sequencing</keyword>
<keyword id="KW-1015">Disulfide bond</keyword>
<keyword id="KW-0378">Hydrolase</keyword>
<keyword id="KW-0442">Lipid degradation</keyword>
<keyword id="KW-0443">Lipid metabolism</keyword>
<keyword id="KW-0479">Metal-binding</keyword>
<keyword id="KW-0959">Myotoxin</keyword>
<keyword id="KW-0964">Secreted</keyword>
<keyword id="KW-0800">Toxin</keyword>
<reference key="1">
    <citation type="journal article" date="1999" name="Eur. J. Biochem.">
        <title>Elapid venom toxins: multiple recruitments of ancient scaffolds.</title>
        <authorList>
            <person name="Alape-Giron A."/>
            <person name="Persson B."/>
            <person name="Cederlund E."/>
            <person name="Flores-Diaz M."/>
            <person name="Gutierrez J.-M."/>
            <person name="Thelestam M."/>
            <person name="Bergman T."/>
            <person name="Joernvall H."/>
        </authorList>
    </citation>
    <scope>PROTEIN SEQUENCE</scope>
    <scope>MASS SPECTROMETRY</scope>
    <source>
        <tissue>Venom</tissue>
    </source>
</reference>
<reference key="2">
    <citation type="journal article" date="1996" name="FEBS Lett.">
        <title>Characterization of multiple nicotinic acetylcholine receptor-binding proteins and phospholipases A2 from the venom of the coral snake Micrurus nigrocinctus.</title>
        <authorList>
            <person name="Alape-Giron A."/>
            <person name="Persson B."/>
            <person name="Cedelund E."/>
            <person name="Flores-Diaz M."/>
            <person name="Gutierrez J.-M."/>
            <person name="Thelestam M."/>
            <person name="Bergman T."/>
            <person name="Joernvall H."/>
        </authorList>
    </citation>
    <scope>PARTIAL PROTEIN SEQUENCE</scope>
    <scope>FUNCTION</scope>
    <source>
        <tissue>Venom</tissue>
    </source>
</reference>
<accession>P81166</accession>
<comment type="function">
    <text evidence="4">Snake venom phospholipase A2 (PLA2) that has only a weak enzymatic activity. It has a myotoxic activity in vivo (dystrophic effect). PLA2 catalyzes the calcium-dependent hydrolysis of the 2-acyl groups in 3-sn-phosphoglycerides.</text>
</comment>
<comment type="catalytic activity">
    <reaction evidence="2 3">
        <text>a 1,2-diacyl-sn-glycero-3-phosphocholine + H2O = a 1-acyl-sn-glycero-3-phosphocholine + a fatty acid + H(+)</text>
        <dbReference type="Rhea" id="RHEA:15801"/>
        <dbReference type="ChEBI" id="CHEBI:15377"/>
        <dbReference type="ChEBI" id="CHEBI:15378"/>
        <dbReference type="ChEBI" id="CHEBI:28868"/>
        <dbReference type="ChEBI" id="CHEBI:57643"/>
        <dbReference type="ChEBI" id="CHEBI:58168"/>
        <dbReference type="EC" id="3.1.1.4"/>
    </reaction>
</comment>
<comment type="cofactor">
    <cofactor evidence="1">
        <name>Ca(2+)</name>
        <dbReference type="ChEBI" id="CHEBI:29108"/>
    </cofactor>
    <text evidence="1">Binds 1 Ca(2+) ion.</text>
</comment>
<comment type="subcellular location">
    <subcellularLocation>
        <location>Secreted</location>
    </subcellularLocation>
</comment>
<comment type="tissue specificity">
    <text>Expressed by the venom gland.</text>
</comment>
<comment type="mass spectrometry">
    <text>In vitro carboxymethylated.</text>
</comment>
<comment type="similarity">
    <text evidence="6">Belongs to the phospholipase A2 family. Group I subfamily. D49 sub-subfamily.</text>
</comment>
<protein>
    <recommendedName>
        <fullName>Basic phospholipase A2 nigroxin A</fullName>
        <shortName>svPLA2</shortName>
        <ecNumber>3.1.1.4</ecNumber>
    </recommendedName>
    <alternativeName>
        <fullName>Phosphatidylcholine 2-acylhydrolase</fullName>
    </alternativeName>
</protein>
<evidence type="ECO:0000250" key="1"/>
<evidence type="ECO:0000255" key="2">
    <source>
        <dbReference type="PROSITE-ProRule" id="PRU10035"/>
    </source>
</evidence>
<evidence type="ECO:0000255" key="3">
    <source>
        <dbReference type="PROSITE-ProRule" id="PRU10036"/>
    </source>
</evidence>
<evidence type="ECO:0000269" key="4">
    <source>
    </source>
</evidence>
<evidence type="ECO:0000269" key="5">
    <source>
    </source>
</evidence>
<evidence type="ECO:0000305" key="6"/>
<proteinExistence type="evidence at protein level"/>
<organism>
    <name type="scientific">Micrurus nigrocinctus</name>
    <name type="common">Central American coral snake</name>
    <name type="synonym">Gargantilla</name>
    <dbReference type="NCBI Taxonomy" id="8635"/>
    <lineage>
        <taxon>Eukaryota</taxon>
        <taxon>Metazoa</taxon>
        <taxon>Chordata</taxon>
        <taxon>Craniata</taxon>
        <taxon>Vertebrata</taxon>
        <taxon>Euteleostomi</taxon>
        <taxon>Lepidosauria</taxon>
        <taxon>Squamata</taxon>
        <taxon>Bifurcata</taxon>
        <taxon>Unidentata</taxon>
        <taxon>Episquamata</taxon>
        <taxon>Toxicofera</taxon>
        <taxon>Serpentes</taxon>
        <taxon>Colubroidea</taxon>
        <taxon>Elapidae</taxon>
        <taxon>Elapinae</taxon>
        <taxon>Micrurus</taxon>
    </lineage>
</organism>
<dbReference type="EC" id="3.1.1.4"/>
<dbReference type="SMR" id="P81166"/>
<dbReference type="GO" id="GO:0005576">
    <property type="term" value="C:extracellular region"/>
    <property type="evidence" value="ECO:0007669"/>
    <property type="project" value="UniProtKB-SubCell"/>
</dbReference>
<dbReference type="GO" id="GO:0005509">
    <property type="term" value="F:calcium ion binding"/>
    <property type="evidence" value="ECO:0007669"/>
    <property type="project" value="InterPro"/>
</dbReference>
<dbReference type="GO" id="GO:0047498">
    <property type="term" value="F:calcium-dependent phospholipase A2 activity"/>
    <property type="evidence" value="ECO:0007669"/>
    <property type="project" value="TreeGrafter"/>
</dbReference>
<dbReference type="GO" id="GO:0005543">
    <property type="term" value="F:phospholipid binding"/>
    <property type="evidence" value="ECO:0007669"/>
    <property type="project" value="TreeGrafter"/>
</dbReference>
<dbReference type="GO" id="GO:0005102">
    <property type="term" value="F:signaling receptor binding"/>
    <property type="evidence" value="ECO:0007669"/>
    <property type="project" value="TreeGrafter"/>
</dbReference>
<dbReference type="GO" id="GO:0090729">
    <property type="term" value="F:toxin activity"/>
    <property type="evidence" value="ECO:0007669"/>
    <property type="project" value="UniProtKB-KW"/>
</dbReference>
<dbReference type="GO" id="GO:0050482">
    <property type="term" value="P:arachidonate secretion"/>
    <property type="evidence" value="ECO:0007669"/>
    <property type="project" value="InterPro"/>
</dbReference>
<dbReference type="GO" id="GO:0006633">
    <property type="term" value="P:fatty acid biosynthetic process"/>
    <property type="evidence" value="ECO:0007669"/>
    <property type="project" value="TreeGrafter"/>
</dbReference>
<dbReference type="GO" id="GO:0016042">
    <property type="term" value="P:lipid catabolic process"/>
    <property type="evidence" value="ECO:0007669"/>
    <property type="project" value="UniProtKB-KW"/>
</dbReference>
<dbReference type="GO" id="GO:0006644">
    <property type="term" value="P:phospholipid metabolic process"/>
    <property type="evidence" value="ECO:0007669"/>
    <property type="project" value="InterPro"/>
</dbReference>
<dbReference type="GO" id="GO:0048146">
    <property type="term" value="P:positive regulation of fibroblast proliferation"/>
    <property type="evidence" value="ECO:0007669"/>
    <property type="project" value="TreeGrafter"/>
</dbReference>
<dbReference type="CDD" id="cd00125">
    <property type="entry name" value="PLA2c"/>
    <property type="match status" value="1"/>
</dbReference>
<dbReference type="FunFam" id="1.20.90.10:FF:000007">
    <property type="entry name" value="Acidic phospholipase A2"/>
    <property type="match status" value="1"/>
</dbReference>
<dbReference type="Gene3D" id="1.20.90.10">
    <property type="entry name" value="Phospholipase A2 domain"/>
    <property type="match status" value="1"/>
</dbReference>
<dbReference type="InterPro" id="IPR001211">
    <property type="entry name" value="PLipase_A2"/>
</dbReference>
<dbReference type="InterPro" id="IPR033112">
    <property type="entry name" value="PLipase_A2_Asp_AS"/>
</dbReference>
<dbReference type="InterPro" id="IPR016090">
    <property type="entry name" value="PLipase_A2_dom"/>
</dbReference>
<dbReference type="InterPro" id="IPR036444">
    <property type="entry name" value="PLipase_A2_dom_sf"/>
</dbReference>
<dbReference type="InterPro" id="IPR033113">
    <property type="entry name" value="PLipase_A2_His_AS"/>
</dbReference>
<dbReference type="PANTHER" id="PTHR11716:SF94">
    <property type="entry name" value="PHOSPHOLIPASE A2"/>
    <property type="match status" value="1"/>
</dbReference>
<dbReference type="PANTHER" id="PTHR11716">
    <property type="entry name" value="PHOSPHOLIPASE A2 FAMILY MEMBER"/>
    <property type="match status" value="1"/>
</dbReference>
<dbReference type="Pfam" id="PF00068">
    <property type="entry name" value="Phospholip_A2_1"/>
    <property type="match status" value="1"/>
</dbReference>
<dbReference type="PRINTS" id="PR00389">
    <property type="entry name" value="PHPHLIPASEA2"/>
</dbReference>
<dbReference type="SMART" id="SM00085">
    <property type="entry name" value="PA2c"/>
    <property type="match status" value="1"/>
</dbReference>
<dbReference type="SUPFAM" id="SSF48619">
    <property type="entry name" value="Phospholipase A2, PLA2"/>
    <property type="match status" value="1"/>
</dbReference>
<dbReference type="PROSITE" id="PS00119">
    <property type="entry name" value="PA2_ASP"/>
    <property type="match status" value="1"/>
</dbReference>
<dbReference type="PROSITE" id="PS00118">
    <property type="entry name" value="PA2_HIS"/>
    <property type="match status" value="1"/>
</dbReference>
<feature type="chain" id="PRO_0000161661" description="Basic phospholipase A2 nigroxin A">
    <location>
        <begin position="1"/>
        <end position="118"/>
    </location>
</feature>
<feature type="active site" evidence="1">
    <location>
        <position position="46"/>
    </location>
</feature>
<feature type="active site" evidence="1">
    <location>
        <position position="92"/>
    </location>
</feature>
<feature type="binding site" evidence="1">
    <location>
        <position position="26"/>
    </location>
    <ligand>
        <name>Ca(2+)</name>
        <dbReference type="ChEBI" id="CHEBI:29108"/>
    </ligand>
</feature>
<feature type="binding site" evidence="1">
    <location>
        <position position="28"/>
    </location>
    <ligand>
        <name>Ca(2+)</name>
        <dbReference type="ChEBI" id="CHEBI:29108"/>
    </ligand>
</feature>
<feature type="binding site" evidence="1">
    <location>
        <position position="30"/>
    </location>
    <ligand>
        <name>Ca(2+)</name>
        <dbReference type="ChEBI" id="CHEBI:29108"/>
    </ligand>
</feature>
<feature type="binding site" evidence="1">
    <location>
        <position position="47"/>
    </location>
    <ligand>
        <name>Ca(2+)</name>
        <dbReference type="ChEBI" id="CHEBI:29108"/>
    </ligand>
</feature>
<feature type="disulfide bond" evidence="1">
    <location>
        <begin position="11"/>
        <end position="70"/>
    </location>
</feature>
<feature type="disulfide bond" evidence="1">
    <location>
        <begin position="25"/>
        <end position="117"/>
    </location>
</feature>
<feature type="disulfide bond" evidence="1">
    <location>
        <begin position="27"/>
        <end position="43"/>
    </location>
</feature>
<feature type="disulfide bond" evidence="1">
    <location>
        <begin position="42"/>
        <end position="98"/>
    </location>
</feature>
<feature type="disulfide bond" evidence="1">
    <location>
        <begin position="49"/>
        <end position="91"/>
    </location>
</feature>
<feature type="disulfide bond" evidence="1">
    <location>
        <begin position="59"/>
        <end position="84"/>
    </location>
</feature>
<feature type="disulfide bond" evidence="1">
    <location>
        <begin position="77"/>
        <end position="89"/>
    </location>
</feature>
<sequence>NLYQLKNMIKCTNTRHWVSFTNYGCYCGYGGSGTPVDELDKCCQVHDKCYDTAKHVCKCSPSMTMYSYDCSEGKLTCKDNNTKCKDFVCNCDRTAALCFAKAPYNNKNFKIDPTKGCQ</sequence>